<protein>
    <recommendedName>
        <fullName evidence="1">DNA-directed RNA polymerase subunit beta</fullName>
        <shortName evidence="1">RNAP subunit beta</shortName>
        <ecNumber evidence="1">2.7.7.6</ecNumber>
    </recommendedName>
    <alternativeName>
        <fullName evidence="1">RNA polymerase subunit beta</fullName>
    </alternativeName>
    <alternativeName>
        <fullName evidence="1">Transcriptase subunit beta</fullName>
    </alternativeName>
</protein>
<keyword id="KW-0240">DNA-directed RNA polymerase</keyword>
<keyword id="KW-0548">Nucleotidyltransferase</keyword>
<keyword id="KW-1185">Reference proteome</keyword>
<keyword id="KW-0804">Transcription</keyword>
<keyword id="KW-0808">Transferase</keyword>
<gene>
    <name evidence="1" type="primary">rpoB</name>
    <name type="ordered locus">CA_C3143</name>
</gene>
<organism>
    <name type="scientific">Clostridium acetobutylicum (strain ATCC 824 / DSM 792 / JCM 1419 / IAM 19013 / LMG 5710 / NBRC 13948 / NRRL B-527 / VKM B-1787 / 2291 / W)</name>
    <dbReference type="NCBI Taxonomy" id="272562"/>
    <lineage>
        <taxon>Bacteria</taxon>
        <taxon>Bacillati</taxon>
        <taxon>Bacillota</taxon>
        <taxon>Clostridia</taxon>
        <taxon>Eubacteriales</taxon>
        <taxon>Clostridiaceae</taxon>
        <taxon>Clostridium</taxon>
    </lineage>
</organism>
<sequence>MIHPVQVGKRTRMSFSKLDEIGVMPNLIEVQLDSYQWFLDNGLQEIFDDINPIQDYTGNLILEFIGYKLDMDNIKYSVEECKERDTTYAAPLKVKVRLLNKETGEVKEQEVFMGDFPLMTEQGTFIINGAERVIVSQLVRSPGAYYDYIVDKNGKKLFSATVIPNRGAWLEYETDSNSVIHVRIDKTRKLPITILVRAMGFGSDAEIVNYFGEEERLKATIEKDNTKTREEALLEIYKRLRPGEPPTVDSAFSLINSLFFDPKRYDLSRVGRYKFNKKLAVSIRIANKTAAKDIVNPETGEIIVEKGQRISKEKALEIQNSGINSVDISVDDNIIRVIGNNFVDIKSYIKFDISDLNIRELVYYPVLKEILENYTDEEAIKEQLKKNVHKLVPKHIIKDDMFATVSYELGLAYGIGNVDDIDHLGNRRVRSVGELLQNQFRIGLSRMERVVKERMTIQDQEVITPQALINIRPVAASIKEFFGSSQLSQFMDQINPLSELTHKRRLSALGPGGLSRERAGFEVRDVHHSHYGRMCPIETPEGPNIGLINSLATYAKVNEYGFVETPYRTVDKEQGRVTDEIHYITADEEDRCLIARANEALDENGYFIDKKITVRAPDEVLVVPANEVDLMDVSARQMVSVATAMIPFLENDDASRALMGSNMQRQAVPLLKPQAPVVGTGIEHKAAVDSGILPKARNAGVVEYVSANEVRVRRDSDGGVDTYRLLKFKRSNQGTCINQRPIVEKNEKVEKGTVLADGQSTDLGEIALGRNIRMGFITWEGYNYEDAMLISEQLVRDDVFTSIHIEEYEAEARDTKLGPEEITRDIPNVGEDALKDIDERGIIRIGAEVRSGDILVGKVTPKGETELTAEERLLRAIFGEKAREVRDTSLRVPHGEAGIIVDVKIFTRENGDELPPGVNELVRCYIAQKRKISVGDKMSGRHGNKGVISRVLPEEDMPFLPDGRPLQICLNPLGVPSRMNIGQVLEVHLGWAAANLGWHIATPVFDGALEPEIVECLKRAGYAEDGKTVLYDGRTGEAFDNRVTVGYMYILKLAHLVDDKIHARSTGPYSLVTQQPLGGKAQFGGQRFGEMEVWALEAYGAAHTLQEILTVKSDDVVGRVKTYEAIVKGENIPEPGIPEAFKVLIKELQALCLDVKVLSDNNNEIELKESIEDETEDLDVNIEGNEDSKVEPIRPQDVQENVSGENVDAGYENEDVDIDYEDLDIDDLKNGLGLEDFNDEH</sequence>
<evidence type="ECO:0000255" key="1">
    <source>
        <dbReference type="HAMAP-Rule" id="MF_01321"/>
    </source>
</evidence>
<evidence type="ECO:0000256" key="2">
    <source>
        <dbReference type="SAM" id="MobiDB-lite"/>
    </source>
</evidence>
<name>RPOB_CLOAB</name>
<proteinExistence type="inferred from homology"/>
<accession>Q97EG9</accession>
<dbReference type="EC" id="2.7.7.6" evidence="1"/>
<dbReference type="EMBL" id="AE001437">
    <property type="protein sequence ID" value="AAK81081.1"/>
    <property type="molecule type" value="Genomic_DNA"/>
</dbReference>
<dbReference type="PIR" id="F97286">
    <property type="entry name" value="F97286"/>
</dbReference>
<dbReference type="RefSeq" id="NP_349741.1">
    <property type="nucleotide sequence ID" value="NC_003030.1"/>
</dbReference>
<dbReference type="RefSeq" id="WP_010966421.1">
    <property type="nucleotide sequence ID" value="NC_003030.1"/>
</dbReference>
<dbReference type="SMR" id="Q97EG9"/>
<dbReference type="STRING" id="272562.CA_C3143"/>
<dbReference type="GeneID" id="44999629"/>
<dbReference type="KEGG" id="cac:CA_C3143"/>
<dbReference type="PATRIC" id="fig|272562.8.peg.3324"/>
<dbReference type="eggNOG" id="COG0085">
    <property type="taxonomic scope" value="Bacteria"/>
</dbReference>
<dbReference type="HOGENOM" id="CLU_000524_4_1_9"/>
<dbReference type="OrthoDB" id="9803954at2"/>
<dbReference type="Proteomes" id="UP000000814">
    <property type="component" value="Chromosome"/>
</dbReference>
<dbReference type="GO" id="GO:0000428">
    <property type="term" value="C:DNA-directed RNA polymerase complex"/>
    <property type="evidence" value="ECO:0007669"/>
    <property type="project" value="UniProtKB-KW"/>
</dbReference>
<dbReference type="GO" id="GO:0003677">
    <property type="term" value="F:DNA binding"/>
    <property type="evidence" value="ECO:0007669"/>
    <property type="project" value="UniProtKB-UniRule"/>
</dbReference>
<dbReference type="GO" id="GO:0003899">
    <property type="term" value="F:DNA-directed RNA polymerase activity"/>
    <property type="evidence" value="ECO:0007669"/>
    <property type="project" value="UniProtKB-UniRule"/>
</dbReference>
<dbReference type="GO" id="GO:0032549">
    <property type="term" value="F:ribonucleoside binding"/>
    <property type="evidence" value="ECO:0007669"/>
    <property type="project" value="InterPro"/>
</dbReference>
<dbReference type="GO" id="GO:0006351">
    <property type="term" value="P:DNA-templated transcription"/>
    <property type="evidence" value="ECO:0007669"/>
    <property type="project" value="UniProtKB-UniRule"/>
</dbReference>
<dbReference type="CDD" id="cd00653">
    <property type="entry name" value="RNA_pol_B_RPB2"/>
    <property type="match status" value="1"/>
</dbReference>
<dbReference type="FunFam" id="3.90.1800.10:FF:000001">
    <property type="entry name" value="DNA-directed RNA polymerase subunit beta"/>
    <property type="match status" value="1"/>
</dbReference>
<dbReference type="Gene3D" id="2.40.50.100">
    <property type="match status" value="1"/>
</dbReference>
<dbReference type="Gene3D" id="2.40.50.150">
    <property type="match status" value="1"/>
</dbReference>
<dbReference type="Gene3D" id="3.90.1100.10">
    <property type="match status" value="1"/>
</dbReference>
<dbReference type="Gene3D" id="2.30.150.10">
    <property type="entry name" value="DNA-directed RNA polymerase, beta subunit, external 1 domain"/>
    <property type="match status" value="1"/>
</dbReference>
<dbReference type="Gene3D" id="2.40.270.10">
    <property type="entry name" value="DNA-directed RNA polymerase, subunit 2, domain 6"/>
    <property type="match status" value="1"/>
</dbReference>
<dbReference type="Gene3D" id="3.90.1800.10">
    <property type="entry name" value="RNA polymerase alpha subunit dimerisation domain"/>
    <property type="match status" value="1"/>
</dbReference>
<dbReference type="Gene3D" id="3.90.1110.10">
    <property type="entry name" value="RNA polymerase Rpb2, domain 2"/>
    <property type="match status" value="1"/>
</dbReference>
<dbReference type="HAMAP" id="MF_01321">
    <property type="entry name" value="RNApol_bact_RpoB"/>
    <property type="match status" value="1"/>
</dbReference>
<dbReference type="InterPro" id="IPR042107">
    <property type="entry name" value="DNA-dir_RNA_pol_bsu_ext_1_sf"/>
</dbReference>
<dbReference type="InterPro" id="IPR019462">
    <property type="entry name" value="DNA-dir_RNA_pol_bsu_external_1"/>
</dbReference>
<dbReference type="InterPro" id="IPR015712">
    <property type="entry name" value="DNA-dir_RNA_pol_su2"/>
</dbReference>
<dbReference type="InterPro" id="IPR007120">
    <property type="entry name" value="DNA-dir_RNAP_su2_dom"/>
</dbReference>
<dbReference type="InterPro" id="IPR037033">
    <property type="entry name" value="DNA-dir_RNAP_su2_hyb_sf"/>
</dbReference>
<dbReference type="InterPro" id="IPR010243">
    <property type="entry name" value="RNA_pol_bsu_bac"/>
</dbReference>
<dbReference type="InterPro" id="IPR007121">
    <property type="entry name" value="RNA_pol_bsu_CS"/>
</dbReference>
<dbReference type="InterPro" id="IPR007644">
    <property type="entry name" value="RNA_pol_bsu_protrusion"/>
</dbReference>
<dbReference type="InterPro" id="IPR007642">
    <property type="entry name" value="RNA_pol_Rpb2_2"/>
</dbReference>
<dbReference type="InterPro" id="IPR037034">
    <property type="entry name" value="RNA_pol_Rpb2_2_sf"/>
</dbReference>
<dbReference type="InterPro" id="IPR007645">
    <property type="entry name" value="RNA_pol_Rpb2_3"/>
</dbReference>
<dbReference type="InterPro" id="IPR007641">
    <property type="entry name" value="RNA_pol_Rpb2_7"/>
</dbReference>
<dbReference type="InterPro" id="IPR014724">
    <property type="entry name" value="RNA_pol_RPB2_OB-fold"/>
</dbReference>
<dbReference type="NCBIfam" id="NF001616">
    <property type="entry name" value="PRK00405.1"/>
    <property type="match status" value="1"/>
</dbReference>
<dbReference type="NCBIfam" id="TIGR02013">
    <property type="entry name" value="rpoB"/>
    <property type="match status" value="1"/>
</dbReference>
<dbReference type="PANTHER" id="PTHR20856">
    <property type="entry name" value="DNA-DIRECTED RNA POLYMERASE I SUBUNIT 2"/>
    <property type="match status" value="1"/>
</dbReference>
<dbReference type="Pfam" id="PF04563">
    <property type="entry name" value="RNA_pol_Rpb2_1"/>
    <property type="match status" value="1"/>
</dbReference>
<dbReference type="Pfam" id="PF04561">
    <property type="entry name" value="RNA_pol_Rpb2_2"/>
    <property type="match status" value="2"/>
</dbReference>
<dbReference type="Pfam" id="PF04565">
    <property type="entry name" value="RNA_pol_Rpb2_3"/>
    <property type="match status" value="1"/>
</dbReference>
<dbReference type="Pfam" id="PF10385">
    <property type="entry name" value="RNA_pol_Rpb2_45"/>
    <property type="match status" value="1"/>
</dbReference>
<dbReference type="Pfam" id="PF00562">
    <property type="entry name" value="RNA_pol_Rpb2_6"/>
    <property type="match status" value="1"/>
</dbReference>
<dbReference type="Pfam" id="PF04560">
    <property type="entry name" value="RNA_pol_Rpb2_7"/>
    <property type="match status" value="1"/>
</dbReference>
<dbReference type="SUPFAM" id="SSF64484">
    <property type="entry name" value="beta and beta-prime subunits of DNA dependent RNA-polymerase"/>
    <property type="match status" value="1"/>
</dbReference>
<dbReference type="PROSITE" id="PS01166">
    <property type="entry name" value="RNA_POL_BETA"/>
    <property type="match status" value="1"/>
</dbReference>
<comment type="function">
    <text evidence="1">DNA-dependent RNA polymerase catalyzes the transcription of DNA into RNA using the four ribonucleoside triphosphates as substrates.</text>
</comment>
<comment type="catalytic activity">
    <reaction evidence="1">
        <text>RNA(n) + a ribonucleoside 5'-triphosphate = RNA(n+1) + diphosphate</text>
        <dbReference type="Rhea" id="RHEA:21248"/>
        <dbReference type="Rhea" id="RHEA-COMP:14527"/>
        <dbReference type="Rhea" id="RHEA-COMP:17342"/>
        <dbReference type="ChEBI" id="CHEBI:33019"/>
        <dbReference type="ChEBI" id="CHEBI:61557"/>
        <dbReference type="ChEBI" id="CHEBI:140395"/>
        <dbReference type="EC" id="2.7.7.6"/>
    </reaction>
</comment>
<comment type="subunit">
    <text evidence="1">The RNAP catalytic core consists of 2 alpha, 1 beta, 1 beta' and 1 omega subunit. When a sigma factor is associated with the core the holoenzyme is formed, which can initiate transcription.</text>
</comment>
<comment type="similarity">
    <text evidence="1">Belongs to the RNA polymerase beta chain family.</text>
</comment>
<reference key="1">
    <citation type="journal article" date="2001" name="J. Bacteriol.">
        <title>Genome sequence and comparative analysis of the solvent-producing bacterium Clostridium acetobutylicum.</title>
        <authorList>
            <person name="Noelling J."/>
            <person name="Breton G."/>
            <person name="Omelchenko M.V."/>
            <person name="Makarova K.S."/>
            <person name="Zeng Q."/>
            <person name="Gibson R."/>
            <person name="Lee H.M."/>
            <person name="Dubois J."/>
            <person name="Qiu D."/>
            <person name="Hitti J."/>
            <person name="Wolf Y.I."/>
            <person name="Tatusov R.L."/>
            <person name="Sabathe F."/>
            <person name="Doucette-Stamm L.A."/>
            <person name="Soucaille P."/>
            <person name="Daly M.J."/>
            <person name="Bennett G.N."/>
            <person name="Koonin E.V."/>
            <person name="Smith D.R."/>
        </authorList>
    </citation>
    <scope>NUCLEOTIDE SEQUENCE [LARGE SCALE GENOMIC DNA]</scope>
    <source>
        <strain>ATCC 824 / DSM 792 / JCM 1419 / IAM 19013 / LMG 5710 / NBRC 13948 / NRRL B-527 / VKM B-1787 / 2291 / W</strain>
    </source>
</reference>
<feature type="chain" id="PRO_0000047884" description="DNA-directed RNA polymerase subunit beta">
    <location>
        <begin position="1"/>
        <end position="1241"/>
    </location>
</feature>
<feature type="region of interest" description="Disordered" evidence="2">
    <location>
        <begin position="1195"/>
        <end position="1219"/>
    </location>
</feature>